<keyword id="KW-0378">Hydrolase</keyword>
<keyword id="KW-0479">Metal-binding</keyword>
<keyword id="KW-0482">Metalloprotease</keyword>
<keyword id="KW-0645">Protease</keyword>
<keyword id="KW-1185">Reference proteome</keyword>
<keyword id="KW-0862">Zinc</keyword>
<reference key="1">
    <citation type="journal article" date="2000" name="Science">
        <title>Complete genome sequence of Neisseria meningitidis serogroup B strain MC58.</title>
        <authorList>
            <person name="Tettelin H."/>
            <person name="Saunders N.J."/>
            <person name="Heidelberg J.F."/>
            <person name="Jeffries A.C."/>
            <person name="Nelson K.E."/>
            <person name="Eisen J.A."/>
            <person name="Ketchum K.A."/>
            <person name="Hood D.W."/>
            <person name="Peden J.F."/>
            <person name="Dodson R.J."/>
            <person name="Nelson W.C."/>
            <person name="Gwinn M.L."/>
            <person name="DeBoy R.T."/>
            <person name="Peterson J.D."/>
            <person name="Hickey E.K."/>
            <person name="Haft D.H."/>
            <person name="Salzberg S.L."/>
            <person name="White O."/>
            <person name="Fleischmann R.D."/>
            <person name="Dougherty B.A."/>
            <person name="Mason T.M."/>
            <person name="Ciecko A."/>
            <person name="Parksey D.S."/>
            <person name="Blair E."/>
            <person name="Cittone H."/>
            <person name="Clark E.B."/>
            <person name="Cotton M.D."/>
            <person name="Utterback T.R."/>
            <person name="Khouri H.M."/>
            <person name="Qin H."/>
            <person name="Vamathevan J.J."/>
            <person name="Gill J."/>
            <person name="Scarlato V."/>
            <person name="Masignani V."/>
            <person name="Pizza M."/>
            <person name="Grandi G."/>
            <person name="Sun L."/>
            <person name="Smith H.O."/>
            <person name="Fraser C.M."/>
            <person name="Moxon E.R."/>
            <person name="Rappuoli R."/>
            <person name="Venter J.C."/>
        </authorList>
    </citation>
    <scope>NUCLEOTIDE SEQUENCE [LARGE SCALE GENOMIC DNA]</scope>
    <source>
        <strain>ATCC BAA-335 / MC58</strain>
    </source>
</reference>
<name>Y1038_NEIMB</name>
<organism>
    <name type="scientific">Neisseria meningitidis serogroup B (strain ATCC BAA-335 / MC58)</name>
    <dbReference type="NCBI Taxonomy" id="122586"/>
    <lineage>
        <taxon>Bacteria</taxon>
        <taxon>Pseudomonadati</taxon>
        <taxon>Pseudomonadota</taxon>
        <taxon>Betaproteobacteria</taxon>
        <taxon>Neisseriales</taxon>
        <taxon>Neisseriaceae</taxon>
        <taxon>Neisseria</taxon>
    </lineage>
</organism>
<accession>Q9JZI3</accession>
<comment type="similarity">
    <text evidence="2">Belongs to the UPF0758 family.</text>
</comment>
<gene>
    <name type="ordered locus">NMB1038</name>
</gene>
<evidence type="ECO:0000255" key="1">
    <source>
        <dbReference type="PROSITE-ProRule" id="PRU01182"/>
    </source>
</evidence>
<evidence type="ECO:0000305" key="2"/>
<feature type="chain" id="PRO_0000190712" description="UPF0758 protein NMB1038">
    <location>
        <begin position="1"/>
        <end position="225"/>
    </location>
</feature>
<feature type="domain" description="MPN" evidence="1">
    <location>
        <begin position="102"/>
        <end position="224"/>
    </location>
</feature>
<feature type="short sequence motif" description="JAMM motif" evidence="1">
    <location>
        <begin position="173"/>
        <end position="186"/>
    </location>
</feature>
<feature type="binding site" evidence="1">
    <location>
        <position position="173"/>
    </location>
    <ligand>
        <name>Zn(2+)</name>
        <dbReference type="ChEBI" id="CHEBI:29105"/>
        <note>catalytic</note>
    </ligand>
</feature>
<feature type="binding site" evidence="1">
    <location>
        <position position="175"/>
    </location>
    <ligand>
        <name>Zn(2+)</name>
        <dbReference type="ChEBI" id="CHEBI:29105"/>
        <note>catalytic</note>
    </ligand>
</feature>
<feature type="binding site" evidence="1">
    <location>
        <position position="186"/>
    </location>
    <ligand>
        <name>Zn(2+)</name>
        <dbReference type="ChEBI" id="CHEBI:29105"/>
        <note>catalytic</note>
    </ligand>
</feature>
<proteinExistence type="inferred from homology"/>
<sequence length="225" mass="24940">MSIKQWPEGERPREKLLERGAAALSDAELLAILLRVGTRGMSAVDLARYLLQEFGSLGRLMSAEVGKLSAYKGMGTASFTQFAVVREIGRRILAEELQESIVLSDPDTVADYLRFHLGQEKVEVSVALLLNRQNQLIAVRELSRGTVAENTIYIREIVKLALDEYADSLIIAHNHPGGSPEPSQEDIMFTRRLAQAMSLVDVSLLDHFIVTSQSVCSFRQLGLMP</sequence>
<protein>
    <recommendedName>
        <fullName>UPF0758 protein NMB1038</fullName>
    </recommendedName>
</protein>
<dbReference type="EMBL" id="AE002098">
    <property type="protein sequence ID" value="AAF41437.1"/>
    <property type="molecule type" value="Genomic_DNA"/>
</dbReference>
<dbReference type="PIR" id="A81129">
    <property type="entry name" value="A81129"/>
</dbReference>
<dbReference type="RefSeq" id="NP_274072.1">
    <property type="nucleotide sequence ID" value="NC_003112.2"/>
</dbReference>
<dbReference type="SMR" id="Q9JZI3"/>
<dbReference type="FunCoup" id="Q9JZI3">
    <property type="interactions" value="161"/>
</dbReference>
<dbReference type="STRING" id="122586.NMB1038"/>
<dbReference type="PaxDb" id="122586-NMB1038"/>
<dbReference type="KEGG" id="nme:NMB1038"/>
<dbReference type="PATRIC" id="fig|122586.8.peg.1322"/>
<dbReference type="HOGENOM" id="CLU_073529_0_1_4"/>
<dbReference type="InParanoid" id="Q9JZI3"/>
<dbReference type="OrthoDB" id="9804482at2"/>
<dbReference type="Proteomes" id="UP000000425">
    <property type="component" value="Chromosome"/>
</dbReference>
<dbReference type="GO" id="GO:0046872">
    <property type="term" value="F:metal ion binding"/>
    <property type="evidence" value="ECO:0007669"/>
    <property type="project" value="UniProtKB-KW"/>
</dbReference>
<dbReference type="GO" id="GO:0008237">
    <property type="term" value="F:metallopeptidase activity"/>
    <property type="evidence" value="ECO:0007669"/>
    <property type="project" value="UniProtKB-KW"/>
</dbReference>
<dbReference type="GO" id="GO:0006508">
    <property type="term" value="P:proteolysis"/>
    <property type="evidence" value="ECO:0007669"/>
    <property type="project" value="UniProtKB-KW"/>
</dbReference>
<dbReference type="CDD" id="cd08071">
    <property type="entry name" value="MPN_DUF2466"/>
    <property type="match status" value="1"/>
</dbReference>
<dbReference type="Gene3D" id="3.40.140.10">
    <property type="entry name" value="Cytidine Deaminase, domain 2"/>
    <property type="match status" value="1"/>
</dbReference>
<dbReference type="InterPro" id="IPR037518">
    <property type="entry name" value="MPN"/>
</dbReference>
<dbReference type="InterPro" id="IPR025657">
    <property type="entry name" value="RadC_JAB"/>
</dbReference>
<dbReference type="InterPro" id="IPR010994">
    <property type="entry name" value="RuvA_2-like"/>
</dbReference>
<dbReference type="InterPro" id="IPR001405">
    <property type="entry name" value="UPF0758"/>
</dbReference>
<dbReference type="InterPro" id="IPR046778">
    <property type="entry name" value="UPF0758_N"/>
</dbReference>
<dbReference type="NCBIfam" id="NF000642">
    <property type="entry name" value="PRK00024.1"/>
    <property type="match status" value="1"/>
</dbReference>
<dbReference type="NCBIfam" id="TIGR00608">
    <property type="entry name" value="radc"/>
    <property type="match status" value="1"/>
</dbReference>
<dbReference type="PANTHER" id="PTHR30471">
    <property type="entry name" value="DNA REPAIR PROTEIN RADC"/>
    <property type="match status" value="1"/>
</dbReference>
<dbReference type="PANTHER" id="PTHR30471:SF3">
    <property type="entry name" value="UPF0758 PROTEIN YEES-RELATED"/>
    <property type="match status" value="1"/>
</dbReference>
<dbReference type="Pfam" id="PF04002">
    <property type="entry name" value="RadC"/>
    <property type="match status" value="1"/>
</dbReference>
<dbReference type="Pfam" id="PF20582">
    <property type="entry name" value="UPF0758_N"/>
    <property type="match status" value="1"/>
</dbReference>
<dbReference type="SUPFAM" id="SSF102712">
    <property type="entry name" value="JAB1/MPN domain"/>
    <property type="match status" value="1"/>
</dbReference>
<dbReference type="SUPFAM" id="SSF47781">
    <property type="entry name" value="RuvA domain 2-like"/>
    <property type="match status" value="1"/>
</dbReference>
<dbReference type="PROSITE" id="PS50249">
    <property type="entry name" value="MPN"/>
    <property type="match status" value="1"/>
</dbReference>